<accession>Q0I6Y9</accession>
<reference key="1">
    <citation type="journal article" date="2006" name="Proc. Natl. Acad. Sci. U.S.A.">
        <title>Genome sequence of Synechococcus CC9311: insights into adaptation to a coastal environment.</title>
        <authorList>
            <person name="Palenik B."/>
            <person name="Ren Q."/>
            <person name="Dupont C.L."/>
            <person name="Myers G.S."/>
            <person name="Heidelberg J.F."/>
            <person name="Badger J.H."/>
            <person name="Madupu R."/>
            <person name="Nelson W.C."/>
            <person name="Brinkac L.M."/>
            <person name="Dodson R.J."/>
            <person name="Durkin A.S."/>
            <person name="Daugherty S.C."/>
            <person name="Sullivan S.A."/>
            <person name="Khouri H."/>
            <person name="Mohamoud Y."/>
            <person name="Halpin R."/>
            <person name="Paulsen I.T."/>
        </authorList>
    </citation>
    <scope>NUCLEOTIDE SEQUENCE [LARGE SCALE GENOMIC DNA]</scope>
    <source>
        <strain>CC9311</strain>
    </source>
</reference>
<protein>
    <recommendedName>
        <fullName evidence="1">Photosystem I assembly protein Ycf3</fullName>
    </recommendedName>
</protein>
<comment type="function">
    <text evidence="1">Essential for the assembly of the photosystem I (PSI) complex. May act as a chaperone-like factor to guide the assembly of the PSI subunits.</text>
</comment>
<comment type="subcellular location">
    <subcellularLocation>
        <location evidence="1">Cellular thylakoid membrane</location>
        <topology evidence="1">Peripheral membrane protein</topology>
    </subcellularLocation>
</comment>
<comment type="similarity">
    <text evidence="1">Belongs to the Ycf3 family.</text>
</comment>
<feature type="chain" id="PRO_1000025974" description="Photosystem I assembly protein Ycf3">
    <location>
        <begin position="1"/>
        <end position="173"/>
    </location>
</feature>
<feature type="repeat" description="TPR 1">
    <location>
        <begin position="35"/>
        <end position="68"/>
    </location>
</feature>
<feature type="repeat" description="TPR 2">
    <location>
        <begin position="72"/>
        <end position="105"/>
    </location>
</feature>
<feature type="repeat" description="TPR 3">
    <location>
        <begin position="120"/>
        <end position="153"/>
    </location>
</feature>
<organism>
    <name type="scientific">Synechococcus sp. (strain CC9311)</name>
    <dbReference type="NCBI Taxonomy" id="64471"/>
    <lineage>
        <taxon>Bacteria</taxon>
        <taxon>Bacillati</taxon>
        <taxon>Cyanobacteriota</taxon>
        <taxon>Cyanophyceae</taxon>
        <taxon>Synechococcales</taxon>
        <taxon>Synechococcaceae</taxon>
        <taxon>Synechococcus</taxon>
    </lineage>
</organism>
<name>YCF3_SYNS3</name>
<keyword id="KW-0472">Membrane</keyword>
<keyword id="KW-0602">Photosynthesis</keyword>
<keyword id="KW-1185">Reference proteome</keyword>
<keyword id="KW-0677">Repeat</keyword>
<keyword id="KW-0793">Thylakoid</keyword>
<keyword id="KW-0802">TPR repeat</keyword>
<sequence length="173" mass="19832">MPRSNRNDNFIDKSFTVMADLIVKLLPINARAKEAYVYYRDGLSAQNDGDYAEALENYEESLKLEENAIDRGETLKNIAIIYMSNGEEERALETYQKALDENPKQPSCLKNMGLIYEKRGRTAEEEGRRDDADGWFDQAANVWTQAVRLNPGGYLDIENWLKSTGRSNVDVYF</sequence>
<gene>
    <name evidence="1" type="primary">ycf3</name>
    <name type="ordered locus">sync_2595</name>
</gene>
<dbReference type="EMBL" id="CP000435">
    <property type="protein sequence ID" value="ABI45568.1"/>
    <property type="molecule type" value="Genomic_DNA"/>
</dbReference>
<dbReference type="SMR" id="Q0I6Y9"/>
<dbReference type="STRING" id="64471.sync_2595"/>
<dbReference type="KEGG" id="syg:sync_2595"/>
<dbReference type="eggNOG" id="COG3063">
    <property type="taxonomic scope" value="Bacteria"/>
</dbReference>
<dbReference type="HOGENOM" id="CLU_141248_0_0_3"/>
<dbReference type="OrthoDB" id="9429505at2"/>
<dbReference type="Proteomes" id="UP000001961">
    <property type="component" value="Chromosome"/>
</dbReference>
<dbReference type="GO" id="GO:0031676">
    <property type="term" value="C:plasma membrane-derived thylakoid membrane"/>
    <property type="evidence" value="ECO:0007669"/>
    <property type="project" value="UniProtKB-SubCell"/>
</dbReference>
<dbReference type="GO" id="GO:0015979">
    <property type="term" value="P:photosynthesis"/>
    <property type="evidence" value="ECO:0007669"/>
    <property type="project" value="UniProtKB-UniRule"/>
</dbReference>
<dbReference type="Gene3D" id="1.25.40.10">
    <property type="entry name" value="Tetratricopeptide repeat domain"/>
    <property type="match status" value="1"/>
</dbReference>
<dbReference type="HAMAP" id="MF_00439">
    <property type="entry name" value="Ycf3"/>
    <property type="match status" value="1"/>
</dbReference>
<dbReference type="InterPro" id="IPR022818">
    <property type="entry name" value="PSI_Ycf3_assembly"/>
</dbReference>
<dbReference type="InterPro" id="IPR011990">
    <property type="entry name" value="TPR-like_helical_dom_sf"/>
</dbReference>
<dbReference type="InterPro" id="IPR019734">
    <property type="entry name" value="TPR_rpt"/>
</dbReference>
<dbReference type="InterPro" id="IPR051685">
    <property type="entry name" value="Ycf3/AcsC/BcsC/TPR_MFPF"/>
</dbReference>
<dbReference type="NCBIfam" id="NF002725">
    <property type="entry name" value="PRK02603.1"/>
    <property type="match status" value="1"/>
</dbReference>
<dbReference type="PANTHER" id="PTHR44943">
    <property type="entry name" value="CELLULOSE SYNTHASE OPERON PROTEIN C"/>
    <property type="match status" value="1"/>
</dbReference>
<dbReference type="PANTHER" id="PTHR44943:SF8">
    <property type="entry name" value="TPR REPEAT-CONTAINING PROTEIN MJ0263"/>
    <property type="match status" value="1"/>
</dbReference>
<dbReference type="Pfam" id="PF13424">
    <property type="entry name" value="TPR_12"/>
    <property type="match status" value="1"/>
</dbReference>
<dbReference type="SMART" id="SM00028">
    <property type="entry name" value="TPR"/>
    <property type="match status" value="3"/>
</dbReference>
<dbReference type="SUPFAM" id="SSF48452">
    <property type="entry name" value="TPR-like"/>
    <property type="match status" value="1"/>
</dbReference>
<dbReference type="PROSITE" id="PS50005">
    <property type="entry name" value="TPR"/>
    <property type="match status" value="3"/>
</dbReference>
<dbReference type="PROSITE" id="PS50293">
    <property type="entry name" value="TPR_REGION"/>
    <property type="match status" value="1"/>
</dbReference>
<evidence type="ECO:0000255" key="1">
    <source>
        <dbReference type="HAMAP-Rule" id="MF_00439"/>
    </source>
</evidence>
<proteinExistence type="inferred from homology"/>